<evidence type="ECO:0000250" key="1"/>
<evidence type="ECO:0000255" key="2"/>
<evidence type="ECO:0000256" key="3">
    <source>
        <dbReference type="SAM" id="MobiDB-lite"/>
    </source>
</evidence>
<evidence type="ECO:0000305" key="4"/>
<reference key="1">
    <citation type="journal article" date="2005" name="Science">
        <title>The genome of the basidiomycetous yeast and human pathogen Cryptococcus neoformans.</title>
        <authorList>
            <person name="Loftus B.J."/>
            <person name="Fung E."/>
            <person name="Roncaglia P."/>
            <person name="Rowley D."/>
            <person name="Amedeo P."/>
            <person name="Bruno D."/>
            <person name="Vamathevan J."/>
            <person name="Miranda M."/>
            <person name="Anderson I.J."/>
            <person name="Fraser J.A."/>
            <person name="Allen J.E."/>
            <person name="Bosdet I.E."/>
            <person name="Brent M.R."/>
            <person name="Chiu R."/>
            <person name="Doering T.L."/>
            <person name="Donlin M.J."/>
            <person name="D'Souza C.A."/>
            <person name="Fox D.S."/>
            <person name="Grinberg V."/>
            <person name="Fu J."/>
            <person name="Fukushima M."/>
            <person name="Haas B.J."/>
            <person name="Huang J.C."/>
            <person name="Janbon G."/>
            <person name="Jones S.J.M."/>
            <person name="Koo H.L."/>
            <person name="Krzywinski M.I."/>
            <person name="Kwon-Chung K.J."/>
            <person name="Lengeler K.B."/>
            <person name="Maiti R."/>
            <person name="Marra M.A."/>
            <person name="Marra R.E."/>
            <person name="Mathewson C.A."/>
            <person name="Mitchell T.G."/>
            <person name="Pertea M."/>
            <person name="Riggs F.R."/>
            <person name="Salzberg S.L."/>
            <person name="Schein J.E."/>
            <person name="Shvartsbeyn A."/>
            <person name="Shin H."/>
            <person name="Shumway M."/>
            <person name="Specht C.A."/>
            <person name="Suh B.B."/>
            <person name="Tenney A."/>
            <person name="Utterback T.R."/>
            <person name="Wickes B.L."/>
            <person name="Wortman J.R."/>
            <person name="Wye N.H."/>
            <person name="Kronstad J.W."/>
            <person name="Lodge J.K."/>
            <person name="Heitman J."/>
            <person name="Davis R.W."/>
            <person name="Fraser C.M."/>
            <person name="Hyman R.W."/>
        </authorList>
    </citation>
    <scope>NUCLEOTIDE SEQUENCE [LARGE SCALE GENOMIC DNA]</scope>
    <source>
        <strain>B-3501A</strain>
    </source>
</reference>
<name>MDV1_CRYNB</name>
<dbReference type="EMBL" id="AAEY01000052">
    <property type="protein sequence ID" value="EAL18126.1"/>
    <property type="molecule type" value="Genomic_DNA"/>
</dbReference>
<dbReference type="RefSeq" id="XP_772773.1">
    <property type="nucleotide sequence ID" value="XM_767680.1"/>
</dbReference>
<dbReference type="SMR" id="P0CS45"/>
<dbReference type="EnsemblFungi" id="AAW46166">
    <property type="protein sequence ID" value="AAW46166"/>
    <property type="gene ID" value="CNK02070"/>
</dbReference>
<dbReference type="GeneID" id="4938843"/>
<dbReference type="KEGG" id="cnb:CNBK1470"/>
<dbReference type="VEuPathDB" id="FungiDB:CNBK1470"/>
<dbReference type="HOGENOM" id="CLU_012350_0_0_1"/>
<dbReference type="OrthoDB" id="6124at5206"/>
<dbReference type="GO" id="GO:0005741">
    <property type="term" value="C:mitochondrial outer membrane"/>
    <property type="evidence" value="ECO:0007669"/>
    <property type="project" value="UniProtKB-SubCell"/>
</dbReference>
<dbReference type="GO" id="GO:0005634">
    <property type="term" value="C:nucleus"/>
    <property type="evidence" value="ECO:0007669"/>
    <property type="project" value="TreeGrafter"/>
</dbReference>
<dbReference type="GO" id="GO:1990234">
    <property type="term" value="C:transferase complex"/>
    <property type="evidence" value="ECO:0007669"/>
    <property type="project" value="UniProtKB-ARBA"/>
</dbReference>
<dbReference type="CDD" id="cd00200">
    <property type="entry name" value="WD40"/>
    <property type="match status" value="1"/>
</dbReference>
<dbReference type="FunFam" id="2.130.10.10:FF:000838">
    <property type="entry name" value="Mitochondrial division protein 1"/>
    <property type="match status" value="1"/>
</dbReference>
<dbReference type="FunFam" id="2.130.10.10:FF:000840">
    <property type="entry name" value="Related to CAF4-CCR4 associated factor"/>
    <property type="match status" value="1"/>
</dbReference>
<dbReference type="Gene3D" id="6.10.280.220">
    <property type="match status" value="1"/>
</dbReference>
<dbReference type="Gene3D" id="2.130.10.10">
    <property type="entry name" value="YVTN repeat-like/Quinoprotein amine dehydrogenase"/>
    <property type="match status" value="3"/>
</dbReference>
<dbReference type="InterPro" id="IPR020472">
    <property type="entry name" value="G-protein_beta_WD-40_rep"/>
</dbReference>
<dbReference type="InterPro" id="IPR015943">
    <property type="entry name" value="WD40/YVTN_repeat-like_dom_sf"/>
</dbReference>
<dbReference type="InterPro" id="IPR019775">
    <property type="entry name" value="WD40_repeat_CS"/>
</dbReference>
<dbReference type="InterPro" id="IPR036322">
    <property type="entry name" value="WD40_repeat_dom_sf"/>
</dbReference>
<dbReference type="InterPro" id="IPR001680">
    <property type="entry name" value="WD40_rpt"/>
</dbReference>
<dbReference type="PANTHER" id="PTHR22847:SF637">
    <property type="entry name" value="WD REPEAT DOMAIN 5B"/>
    <property type="match status" value="1"/>
</dbReference>
<dbReference type="PANTHER" id="PTHR22847">
    <property type="entry name" value="WD40 REPEAT PROTEIN"/>
    <property type="match status" value="1"/>
</dbReference>
<dbReference type="Pfam" id="PF00400">
    <property type="entry name" value="WD40"/>
    <property type="match status" value="4"/>
</dbReference>
<dbReference type="PRINTS" id="PR00320">
    <property type="entry name" value="GPROTEINBRPT"/>
</dbReference>
<dbReference type="SMART" id="SM00320">
    <property type="entry name" value="WD40"/>
    <property type="match status" value="7"/>
</dbReference>
<dbReference type="SUPFAM" id="SSF50978">
    <property type="entry name" value="WD40 repeat-like"/>
    <property type="match status" value="1"/>
</dbReference>
<dbReference type="PROSITE" id="PS00678">
    <property type="entry name" value="WD_REPEATS_1"/>
    <property type="match status" value="4"/>
</dbReference>
<dbReference type="PROSITE" id="PS50082">
    <property type="entry name" value="WD_REPEATS_2"/>
    <property type="match status" value="6"/>
</dbReference>
<dbReference type="PROSITE" id="PS50294">
    <property type="entry name" value="WD_REPEATS_REGION"/>
    <property type="match status" value="1"/>
</dbReference>
<proteinExistence type="inferred from homology"/>
<gene>
    <name type="primary">MDV1</name>
    <name type="ordered locus">CNBK1470</name>
</gene>
<accession>P0CS45</accession>
<accession>Q55K39</accession>
<accession>Q5K9G0</accession>
<comment type="function">
    <text evidence="1">Involved in mitochondrial fission. Acts as an adapter protein required to form mitochondrial fission complexes. Formation of these complexes is required to promote constriction and fission of the mitochondrial compartment at a late step in mitochondrial division (By similarity).</text>
</comment>
<comment type="subcellular location">
    <subcellularLocation>
        <location evidence="1">Mitochondrion outer membrane</location>
        <topology evidence="1">Peripheral membrane protein</topology>
        <orientation evidence="1">Cytoplasmic side</orientation>
    </subcellularLocation>
</comment>
<comment type="similarity">
    <text evidence="4">Belongs to the WD repeat MDV1/CAF4 family.</text>
</comment>
<sequence length="757" mass="82615">MANHHDHDKPLRSALDPISSPYFSSLNGTLSIAKEVLIGPFQGDHRRSESARILSDLAPSLMQPRFLNAASSSQQSLSKSSHPGAPYPLLRLPTNLPFNKSSRPTASSLAILEAVDNLASLSLGDVSHPQNGQNSPSLIRGFKATIPSSELAKQRRRMVRGGIVDEDLGGKIGLKKLGDRARGLLTEKGEDEEDGELGVGRHAVKKRRKKRESRRFTEGRHLEGKLRLEDLAKQADEIGQDKENLHVRQSLIQSEIAEVGAKIDALEDIRRHLEASLLHLQEEDLELDDELEGVQELMASPAIKAAAGAKSLPLSSSGAGISNKSSRRRKGPAFLPSEHDELPSGVAFMTLNGHTAPITALDFDEPYGMLVTAGQDDVVKVWDLCDGEEIGQLRGHRGTVKALQVEDTLCLTGGADGNVRLWDLRMVEDYEERLHTQLAELARQDPLERIAEQRAHEEDGEHAEQDDELPDGTLQDPQPGDGSPCVRTLEGHSKSVTSLYYEDGCLVTGSSDKTIRQWDVATGQCVLTMDILWAISNPPPPPSSVPPQRPPRLSHRSSTSFGSNTYEDILPSPGASLVGMSGAALLGAATGQNFAVPTPPYADGTWEMYQDFVGGVQFWGYALASGSGDGGVRMWDMRTGQAHRTLIGHTAPVTCLQFDEQYIVTGSLDRTVRIWDLRMGSVSEVHKYEYPVTALQFDSRKVVACTGENGVEVYNRTTHAHSRLVVNGHTKPAEKMRFIDKYLVSGGRDGCAKVWAM</sequence>
<organism>
    <name type="scientific">Cryptococcus neoformans var. neoformans serotype D (strain B-3501A)</name>
    <name type="common">Filobasidiella neoformans</name>
    <dbReference type="NCBI Taxonomy" id="283643"/>
    <lineage>
        <taxon>Eukaryota</taxon>
        <taxon>Fungi</taxon>
        <taxon>Dikarya</taxon>
        <taxon>Basidiomycota</taxon>
        <taxon>Agaricomycotina</taxon>
        <taxon>Tremellomycetes</taxon>
        <taxon>Tremellales</taxon>
        <taxon>Cryptococcaceae</taxon>
        <taxon>Cryptococcus</taxon>
        <taxon>Cryptococcus neoformans species complex</taxon>
    </lineage>
</organism>
<feature type="chain" id="PRO_0000410335" description="Mitochondrial division protein 1">
    <location>
        <begin position="1"/>
        <end position="757"/>
    </location>
</feature>
<feature type="repeat" description="WD 1">
    <location>
        <begin position="353"/>
        <end position="394"/>
    </location>
</feature>
<feature type="repeat" description="WD 2">
    <location>
        <begin position="396"/>
        <end position="432"/>
    </location>
</feature>
<feature type="repeat" description="WD 3">
    <location>
        <begin position="491"/>
        <end position="528"/>
    </location>
</feature>
<feature type="repeat" description="WD 4">
    <location>
        <begin position="602"/>
        <end position="645"/>
    </location>
</feature>
<feature type="repeat" description="WD 5">
    <location>
        <begin position="648"/>
        <end position="685"/>
    </location>
</feature>
<feature type="repeat" description="WD 6">
    <location>
        <begin position="687"/>
        <end position="724"/>
    </location>
</feature>
<feature type="repeat" description="WD 7">
    <location>
        <begin position="728"/>
        <end position="757"/>
    </location>
</feature>
<feature type="region of interest" description="Disordered" evidence="3">
    <location>
        <begin position="69"/>
        <end position="88"/>
    </location>
</feature>
<feature type="region of interest" description="Disordered" evidence="3">
    <location>
        <begin position="312"/>
        <end position="336"/>
    </location>
</feature>
<feature type="region of interest" description="Disordered" evidence="3">
    <location>
        <begin position="454"/>
        <end position="489"/>
    </location>
</feature>
<feature type="region of interest" description="Disordered" evidence="3">
    <location>
        <begin position="538"/>
        <end position="564"/>
    </location>
</feature>
<feature type="coiled-coil region" evidence="2">
    <location>
        <begin position="225"/>
        <end position="300"/>
    </location>
</feature>
<feature type="compositionally biased region" description="Low complexity" evidence="3">
    <location>
        <begin position="71"/>
        <end position="81"/>
    </location>
</feature>
<feature type="compositionally biased region" description="Low complexity" evidence="3">
    <location>
        <begin position="312"/>
        <end position="324"/>
    </location>
</feature>
<feature type="compositionally biased region" description="Basic and acidic residues" evidence="3">
    <location>
        <begin position="454"/>
        <end position="463"/>
    </location>
</feature>
<feature type="compositionally biased region" description="Pro residues" evidence="3">
    <location>
        <begin position="538"/>
        <end position="550"/>
    </location>
</feature>
<protein>
    <recommendedName>
        <fullName>Mitochondrial division protein 1</fullName>
    </recommendedName>
</protein>
<keyword id="KW-0175">Coiled coil</keyword>
<keyword id="KW-0472">Membrane</keyword>
<keyword id="KW-0496">Mitochondrion</keyword>
<keyword id="KW-1000">Mitochondrion outer membrane</keyword>
<keyword id="KW-0677">Repeat</keyword>
<keyword id="KW-0853">WD repeat</keyword>